<comment type="function">
    <text>Functions as a digestive enzyme in the cockroach.</text>
</comment>
<comment type="subunit">
    <text evidence="5">Homodimer.</text>
</comment>
<comment type="allergen">
    <text>Causes an allergic reaction in human. Binds to IgE.</text>
</comment>
<comment type="similarity">
    <text evidence="6">Belongs to the peptidase A1 family.</text>
</comment>
<feature type="signal peptide" evidence="2">
    <location>
        <begin position="1"/>
        <end position="19"/>
    </location>
</feature>
<feature type="propeptide" id="PRO_0000025935" description="Removed in mature form">
    <location>
        <begin position="20"/>
        <end position="24"/>
    </location>
</feature>
<feature type="chain" id="PRO_0000025936" description="Aspartic protease Bla g 2">
    <location>
        <begin position="25"/>
        <end position="352"/>
    </location>
</feature>
<feature type="domain" description="Peptidase A1" evidence="3">
    <location>
        <begin position="39"/>
        <end position="346"/>
    </location>
</feature>
<feature type="active site" evidence="1">
    <location>
        <position position="55"/>
    </location>
</feature>
<feature type="active site" evidence="1">
    <location>
        <position position="239"/>
    </location>
</feature>
<feature type="binding site">
    <location>
        <position position="178"/>
    </location>
    <ligand>
        <name>Zn(2+)</name>
        <dbReference type="ChEBI" id="CHEBI:29105"/>
    </ligand>
</feature>
<feature type="binding site">
    <location>
        <position position="186"/>
    </location>
    <ligand>
        <name>Zn(2+)</name>
        <dbReference type="ChEBI" id="CHEBI:29105"/>
    </ligand>
</feature>
<feature type="binding site">
    <location>
        <position position="326"/>
    </location>
    <ligand>
        <name>Zn(2+)</name>
        <dbReference type="ChEBI" id="CHEBI:29105"/>
    </ligand>
</feature>
<feature type="binding site">
    <location>
        <position position="330"/>
    </location>
    <ligand>
        <name>Zn(2+)</name>
        <dbReference type="ChEBI" id="CHEBI:29105"/>
    </ligand>
</feature>
<feature type="glycosylation site" description="N-linked (GlcNAc...) asparagine" evidence="2">
    <location>
        <position position="117"/>
    </location>
</feature>
<feature type="glycosylation site" description="N-linked (GlcNAc...) asparagine" evidence="4 5">
    <location>
        <position position="295"/>
    </location>
</feature>
<feature type="glycosylation site" description="N-linked (GlcNAc...) asparagine" evidence="4 5">
    <location>
        <position position="340"/>
    </location>
</feature>
<feature type="disulfide bond">
    <location>
        <begin position="59"/>
        <end position="151"/>
    </location>
</feature>
<feature type="disulfide bond">
    <location>
        <begin position="68"/>
        <end position="73"/>
    </location>
</feature>
<feature type="disulfide bond">
    <location>
        <begin position="75"/>
        <end position="136"/>
    </location>
</feature>
<feature type="disulfide bond">
    <location>
        <begin position="261"/>
        <end position="272"/>
    </location>
</feature>
<feature type="disulfide bond">
    <location>
        <begin position="276"/>
        <end position="309"/>
    </location>
</feature>
<feature type="sequence conflict" description="In Ref. 2; ABP35603." evidence="6" ref="2">
    <original>L</original>
    <variation>I</variation>
    <location>
        <position position="6"/>
    </location>
</feature>
<feature type="sequence conflict" description="In Ref. 2; ABP35603." evidence="6" ref="2">
    <original>K</original>
    <variation>R</variation>
    <location>
        <position position="87"/>
    </location>
</feature>
<feature type="sequence conflict" description="In Ref. 2; ABP35603." evidence="6" ref="2">
    <original>S</original>
    <variation>F</variation>
    <location>
        <position position="116"/>
    </location>
</feature>
<feature type="sequence conflict" description="In Ref. 2; ABP35603." evidence="6" ref="2">
    <original>V</original>
    <variation>G</variation>
    <location>
        <position position="142"/>
    </location>
</feature>
<feature type="sequence conflict" description="In Ref. 2; ABP35603." evidence="6" ref="2">
    <original>T</original>
    <variation>A</variation>
    <location>
        <position position="342"/>
    </location>
</feature>
<feature type="strand" evidence="7">
    <location>
        <begin position="31"/>
        <end position="35"/>
    </location>
</feature>
<feature type="strand" evidence="7">
    <location>
        <begin position="39"/>
        <end position="45"/>
    </location>
</feature>
<feature type="strand" evidence="7">
    <location>
        <begin position="48"/>
        <end position="55"/>
    </location>
</feature>
<feature type="strand" evidence="7">
    <location>
        <begin position="61"/>
        <end position="64"/>
    </location>
</feature>
<feature type="helix" evidence="7">
    <location>
        <begin position="71"/>
        <end position="74"/>
    </location>
</feature>
<feature type="strand" evidence="7">
    <location>
        <begin position="87"/>
        <end position="89"/>
    </location>
</feature>
<feature type="strand" evidence="7">
    <location>
        <begin position="94"/>
        <end position="98"/>
    </location>
</feature>
<feature type="turn" evidence="7">
    <location>
        <begin position="99"/>
        <end position="101"/>
    </location>
</feature>
<feature type="strand" evidence="7">
    <location>
        <begin position="102"/>
        <end position="115"/>
    </location>
</feature>
<feature type="strand" evidence="7">
    <location>
        <begin position="118"/>
        <end position="131"/>
    </location>
</feature>
<feature type="helix" evidence="7">
    <location>
        <begin position="134"/>
        <end position="137"/>
    </location>
</feature>
<feature type="strand" evidence="7">
    <location>
        <begin position="141"/>
        <end position="145"/>
    </location>
</feature>
<feature type="strand" evidence="8">
    <location>
        <begin position="154"/>
        <end position="157"/>
    </location>
</feature>
<feature type="helix" evidence="7">
    <location>
        <begin position="160"/>
        <end position="166"/>
    </location>
</feature>
<feature type="strand" evidence="7">
    <location>
        <begin position="172"/>
        <end position="180"/>
    </location>
</feature>
<feature type="strand" evidence="7">
    <location>
        <begin position="186"/>
        <end position="192"/>
    </location>
</feature>
<feature type="helix" evidence="7">
    <location>
        <begin position="197"/>
        <end position="199"/>
    </location>
</feature>
<feature type="strand" evidence="7">
    <location>
        <begin position="200"/>
        <end position="210"/>
    </location>
</feature>
<feature type="strand" evidence="8">
    <location>
        <begin position="212"/>
        <end position="215"/>
    </location>
</feature>
<feature type="strand" evidence="7">
    <location>
        <begin position="220"/>
        <end position="224"/>
    </location>
</feature>
<feature type="strand" evidence="7">
    <location>
        <begin position="227"/>
        <end position="230"/>
    </location>
</feature>
<feature type="strand" evidence="7">
    <location>
        <begin position="235"/>
        <end position="238"/>
    </location>
</feature>
<feature type="strand" evidence="7">
    <location>
        <begin position="243"/>
        <end position="248"/>
    </location>
</feature>
<feature type="helix" evidence="7">
    <location>
        <begin position="249"/>
        <end position="259"/>
    </location>
</feature>
<feature type="strand" evidence="7">
    <location>
        <begin position="262"/>
        <end position="265"/>
    </location>
</feature>
<feature type="strand" evidence="7">
    <location>
        <begin position="270"/>
        <end position="274"/>
    </location>
</feature>
<feature type="helix" evidence="7">
    <location>
        <begin position="276"/>
        <end position="281"/>
    </location>
</feature>
<feature type="strand" evidence="7">
    <location>
        <begin position="285"/>
        <end position="289"/>
    </location>
</feature>
<feature type="strand" evidence="7">
    <location>
        <begin position="292"/>
        <end position="296"/>
    </location>
</feature>
<feature type="helix" evidence="7">
    <location>
        <begin position="298"/>
        <end position="301"/>
    </location>
</feature>
<feature type="strand" evidence="7">
    <location>
        <begin position="302"/>
        <end position="305"/>
    </location>
</feature>
<feature type="strand" evidence="7">
    <location>
        <begin position="308"/>
        <end position="316"/>
    </location>
</feature>
<feature type="strand" evidence="7">
    <location>
        <begin position="320"/>
        <end position="324"/>
    </location>
</feature>
<feature type="helix" evidence="7">
    <location>
        <begin position="326"/>
        <end position="329"/>
    </location>
</feature>
<feature type="strand" evidence="7">
    <location>
        <begin position="332"/>
        <end position="337"/>
    </location>
</feature>
<feature type="turn" evidence="7">
    <location>
        <begin position="338"/>
        <end position="341"/>
    </location>
</feature>
<feature type="strand" evidence="7">
    <location>
        <begin position="342"/>
        <end position="348"/>
    </location>
</feature>
<evidence type="ECO:0000250" key="1"/>
<evidence type="ECO:0000255" key="2"/>
<evidence type="ECO:0000255" key="3">
    <source>
        <dbReference type="PROSITE-ProRule" id="PRU01103"/>
    </source>
</evidence>
<evidence type="ECO:0000269" key="4">
    <source>
    </source>
</evidence>
<evidence type="ECO:0000269" key="5">
    <source>
    </source>
</evidence>
<evidence type="ECO:0000305" key="6"/>
<evidence type="ECO:0007829" key="7">
    <source>
        <dbReference type="PDB" id="1YG9"/>
    </source>
</evidence>
<evidence type="ECO:0007829" key="8">
    <source>
        <dbReference type="PDB" id="2NR6"/>
    </source>
</evidence>
<proteinExistence type="evidence at protein level"/>
<organism>
    <name type="scientific">Blattella germanica</name>
    <name type="common">German cockroach</name>
    <name type="synonym">Blatta germanica</name>
    <dbReference type="NCBI Taxonomy" id="6973"/>
    <lineage>
        <taxon>Eukaryota</taxon>
        <taxon>Metazoa</taxon>
        <taxon>Ecdysozoa</taxon>
        <taxon>Arthropoda</taxon>
        <taxon>Hexapoda</taxon>
        <taxon>Insecta</taxon>
        <taxon>Pterygota</taxon>
        <taxon>Neoptera</taxon>
        <taxon>Polyneoptera</taxon>
        <taxon>Dictyoptera</taxon>
        <taxon>Blattodea</taxon>
        <taxon>Blaberoidea</taxon>
        <taxon>Blattellidae</taxon>
        <taxon>Blattella</taxon>
    </lineage>
</organism>
<name>ASP2_BLAGE</name>
<reference key="1">
    <citation type="journal article" date="1995" name="J. Biol. Chem.">
        <title>Molecular cloning of a major cockroach (Blattella germanica) allergen, Bla g 2. Sequence homology to the aspartic proteases.</title>
        <authorList>
            <person name="Arruda L.K."/>
            <person name="Vailes L.D."/>
            <person name="Mann B.J."/>
            <person name="Shannon J."/>
            <person name="Fox J.W."/>
            <person name="Vedvick T.S."/>
            <person name="Hayden M.L."/>
            <person name="Chapman M.D."/>
        </authorList>
    </citation>
    <scope>NUCLEOTIDE SEQUENCE [MRNA]</scope>
    <scope>PARTIAL PROTEIN SEQUENCE</scope>
</reference>
<reference key="2">
    <citation type="submission" date="2007-01" db="EMBL/GenBank/DDBJ databases">
        <title>cDNA sequence encoding a Bla g 2 isoform.</title>
        <authorList>
            <person name="Lee H."/>
            <person name="Jeong K.Y."/>
            <person name="Yong T.-S."/>
        </authorList>
    </citation>
    <scope>NUCLEOTIDE SEQUENCE [MRNA]</scope>
</reference>
<reference key="3">
    <citation type="journal article" date="2008" name="J. Biol. Chem.">
        <title>Crystal structure of a dimerized cockroach allergen Bla g 2 complexed with a monoclonal antibody.</title>
        <authorList>
            <person name="Li M."/>
            <person name="Gustchina A."/>
            <person name="Alexandratos J."/>
            <person name="Wlodawer A."/>
            <person name="Wunschmann S."/>
            <person name="Kepley C.L."/>
            <person name="Chapman M.D."/>
            <person name="Pomes A."/>
        </authorList>
    </citation>
    <scope>X-RAY CRYSTALLOGRAPHY (2.81 ANGSTROMS) OF 25-350 IN COMPLEX WITH ANTIBODY</scope>
    <scope>SUBUNIT</scope>
    <scope>DISULFIDE BONDS</scope>
    <scope>GLYCOSYLATION AT ASN-295 AND ASN-340</scope>
</reference>
<reference key="4">
    <citation type="journal article" date="2005" name="J. Mol. Biol.">
        <title>Crystal structure of cockroach allergen Bla g 2, an unusual zinc binding aspartic protease with a novel mode of self-inhibition.</title>
        <authorList>
            <person name="Gustchina A."/>
            <person name="Li M."/>
            <person name="Wunschmann S."/>
            <person name="Chapman M.D."/>
            <person name="Pomes A."/>
            <person name="Wlodawer A."/>
        </authorList>
    </citation>
    <scope>X-RAY CRYSTALLOGRAPHY (1.3 ANGSTROMS) OF 29-348</scope>
    <scope>DISULFIDE BONDS</scope>
    <scope>ZINC BINDING</scope>
    <scope>GLYCOSYLATION AT ASN-295 AND ASN-340</scope>
</reference>
<sequence length="352" mass="38558">MIGLKLVTVLFAVATITHAAELQRVPLYKLVHVFINTQYAGITKIGNQNFLTVFDSTSCNVVVASQECVGGACVCPNLQKYEKLKPKYISDGNVQVKFFDTGSAVGRGIEDSLTISNLTTSQQDIVLADELSQEVCILSADVVVGIAAPGCPNALKGKTVLENFVEENLIAPVFSIHHARFQDGEHFGEIIFGGSDWKYVDGEFTYVPLVGDDSWKFRLDGVKIGDTTVAPAGTQAIIDTSKAIIVGPKAYVNPINEAIGCVVEKTTTRRICKLDCSKIPSLPDVTFVINGRNFNISSQYYIQQNGNLCYSGFQPCGHSDHFFIGDFFVDHYYSEFNWENKTMGFGRSVESV</sequence>
<accession>P54958</accession>
<accession>B0L0M0</accession>
<protein>
    <recommendedName>
        <fullName>Aspartic protease Bla g 2</fullName>
        <ecNumber>3.4.23.-</ecNumber>
    </recommendedName>
    <alternativeName>
        <fullName>Allergen Bla g II</fullName>
    </alternativeName>
    <allergenName>Bla g 2</allergenName>
</protein>
<dbReference type="EC" id="3.4.23.-"/>
<dbReference type="EMBL" id="U28863">
    <property type="protein sequence ID" value="AAA86744.1"/>
    <property type="molecule type" value="mRNA"/>
</dbReference>
<dbReference type="EMBL" id="EF203068">
    <property type="protein sequence ID" value="ABP35603.1"/>
    <property type="molecule type" value="mRNA"/>
</dbReference>
<dbReference type="PIR" id="A57164">
    <property type="entry name" value="A57164"/>
</dbReference>
<dbReference type="PDB" id="1YG9">
    <property type="method" value="X-ray"/>
    <property type="resolution" value="1.30 A"/>
    <property type="chains" value="A=25-348"/>
</dbReference>
<dbReference type="PDB" id="2NR6">
    <property type="method" value="X-ray"/>
    <property type="resolution" value="2.81 A"/>
    <property type="chains" value="A/B=25-343"/>
</dbReference>
<dbReference type="PDB" id="3LIZ">
    <property type="method" value="X-ray"/>
    <property type="resolution" value="1.80 A"/>
    <property type="chains" value="A=25-352"/>
</dbReference>
<dbReference type="PDB" id="4RLD">
    <property type="method" value="X-ray"/>
    <property type="resolution" value="2.90 A"/>
    <property type="chains" value="A/B/C/D=25-350"/>
</dbReference>
<dbReference type="PDBsum" id="1YG9"/>
<dbReference type="PDBsum" id="2NR6"/>
<dbReference type="PDBsum" id="3LIZ"/>
<dbReference type="PDBsum" id="4RLD"/>
<dbReference type="SMR" id="P54958"/>
<dbReference type="Allergome" id="141">
    <property type="allergen name" value="Bla g 2"/>
</dbReference>
<dbReference type="Allergome" id="3140">
    <property type="allergen name" value="Bla g 2.0101"/>
</dbReference>
<dbReference type="Allergome" id="4012">
    <property type="allergen name" value="Bla g 2.0201"/>
</dbReference>
<dbReference type="MEROPS" id="A01.950"/>
<dbReference type="iPTMnet" id="P54958"/>
<dbReference type="ABCD" id="P54958">
    <property type="antibodies" value="2 sequenced antibodies"/>
</dbReference>
<dbReference type="EvolutionaryTrace" id="P54958"/>
<dbReference type="GO" id="GO:0004190">
    <property type="term" value="F:aspartic-type endopeptidase activity"/>
    <property type="evidence" value="ECO:0007669"/>
    <property type="project" value="UniProtKB-KW"/>
</dbReference>
<dbReference type="GO" id="GO:0046872">
    <property type="term" value="F:metal ion binding"/>
    <property type="evidence" value="ECO:0007669"/>
    <property type="project" value="UniProtKB-KW"/>
</dbReference>
<dbReference type="GO" id="GO:0006508">
    <property type="term" value="P:proteolysis"/>
    <property type="evidence" value="ECO:0007669"/>
    <property type="project" value="UniProtKB-KW"/>
</dbReference>
<dbReference type="CDD" id="cd05471">
    <property type="entry name" value="pepsin_like"/>
    <property type="match status" value="1"/>
</dbReference>
<dbReference type="Gene3D" id="2.60.40.1960">
    <property type="match status" value="1"/>
</dbReference>
<dbReference type="Gene3D" id="2.40.70.10">
    <property type="entry name" value="Acid Proteases"/>
    <property type="match status" value="2"/>
</dbReference>
<dbReference type="InterPro" id="IPR001461">
    <property type="entry name" value="Aspartic_peptidase_A1"/>
</dbReference>
<dbReference type="InterPro" id="IPR034164">
    <property type="entry name" value="Pepsin-like_dom"/>
</dbReference>
<dbReference type="InterPro" id="IPR033121">
    <property type="entry name" value="PEPTIDASE_A1"/>
</dbReference>
<dbReference type="InterPro" id="IPR021109">
    <property type="entry name" value="Peptidase_aspartic_dom_sf"/>
</dbReference>
<dbReference type="PANTHER" id="PTHR47966">
    <property type="entry name" value="BETA-SITE APP-CLEAVING ENZYME, ISOFORM A-RELATED"/>
    <property type="match status" value="1"/>
</dbReference>
<dbReference type="PANTHER" id="PTHR47966:SF51">
    <property type="entry name" value="BETA-SITE APP-CLEAVING ENZYME, ISOFORM A-RELATED"/>
    <property type="match status" value="1"/>
</dbReference>
<dbReference type="Pfam" id="PF00026">
    <property type="entry name" value="Asp"/>
    <property type="match status" value="1"/>
</dbReference>
<dbReference type="PRINTS" id="PR00792">
    <property type="entry name" value="PEPSIN"/>
</dbReference>
<dbReference type="SUPFAM" id="SSF50630">
    <property type="entry name" value="Acid proteases"/>
    <property type="match status" value="1"/>
</dbReference>
<dbReference type="PROSITE" id="PS51767">
    <property type="entry name" value="PEPTIDASE_A1"/>
    <property type="match status" value="1"/>
</dbReference>
<keyword id="KW-0002">3D-structure</keyword>
<keyword id="KW-0020">Allergen</keyword>
<keyword id="KW-0064">Aspartyl protease</keyword>
<keyword id="KW-0903">Direct protein sequencing</keyword>
<keyword id="KW-1015">Disulfide bond</keyword>
<keyword id="KW-0325">Glycoprotein</keyword>
<keyword id="KW-0378">Hydrolase</keyword>
<keyword id="KW-0479">Metal-binding</keyword>
<keyword id="KW-0645">Protease</keyword>
<keyword id="KW-0732">Signal</keyword>
<keyword id="KW-0862">Zinc</keyword>
<keyword id="KW-0865">Zymogen</keyword>